<reference key="1">
    <citation type="journal article" date="2008" name="DNA Res.">
        <title>Comparative genome analysis of Lactobacillus reuteri and Lactobacillus fermentum reveal a genomic island for reuterin and cobalamin production.</title>
        <authorList>
            <person name="Morita H."/>
            <person name="Toh H."/>
            <person name="Fukuda S."/>
            <person name="Horikawa H."/>
            <person name="Oshima K."/>
            <person name="Suzuki T."/>
            <person name="Murakami M."/>
            <person name="Hisamatsu S."/>
            <person name="Kato Y."/>
            <person name="Takizawa T."/>
            <person name="Fukuoka H."/>
            <person name="Yoshimura T."/>
            <person name="Itoh K."/>
            <person name="O'Sullivan D.J."/>
            <person name="McKay L.L."/>
            <person name="Ohno H."/>
            <person name="Kikuchi J."/>
            <person name="Masaoka T."/>
            <person name="Hattori M."/>
        </authorList>
    </citation>
    <scope>NUCLEOTIDE SEQUENCE [LARGE SCALE GENOMIC DNA]</scope>
    <source>
        <strain>JCM 1112</strain>
    </source>
</reference>
<name>MRAY_LIMRJ</name>
<comment type="function">
    <text evidence="1">Catalyzes the initial step of the lipid cycle reactions in the biosynthesis of the cell wall peptidoglycan: transfers peptidoglycan precursor phospho-MurNAc-pentapeptide from UDP-MurNAc-pentapeptide onto the lipid carrier undecaprenyl phosphate, yielding undecaprenyl-pyrophosphoryl-MurNAc-pentapeptide, known as lipid I.</text>
</comment>
<comment type="catalytic activity">
    <reaction evidence="1">
        <text>UDP-N-acetyl-alpha-D-muramoyl-L-alanyl-gamma-D-glutamyl-L-lysyl-D-alanyl-D-alanine + di-trans,octa-cis-undecaprenyl phosphate = Mur2Ac(oyl-L-Ala-gamma-D-Glu-L-Lys-D-Ala-D-Ala)-di-trans,octa-cis-undecaprenyl diphosphate + UMP</text>
        <dbReference type="Rhea" id="RHEA:21920"/>
        <dbReference type="ChEBI" id="CHEBI:57865"/>
        <dbReference type="ChEBI" id="CHEBI:60032"/>
        <dbReference type="ChEBI" id="CHEBI:60392"/>
        <dbReference type="ChEBI" id="CHEBI:70758"/>
        <dbReference type="EC" id="2.7.8.13"/>
    </reaction>
</comment>
<comment type="cofactor">
    <cofactor evidence="1">
        <name>Mg(2+)</name>
        <dbReference type="ChEBI" id="CHEBI:18420"/>
    </cofactor>
</comment>
<comment type="pathway">
    <text evidence="1">Cell wall biogenesis; peptidoglycan biosynthesis.</text>
</comment>
<comment type="subcellular location">
    <subcellularLocation>
        <location evidence="1">Cell membrane</location>
        <topology evidence="1">Multi-pass membrane protein</topology>
    </subcellularLocation>
</comment>
<comment type="similarity">
    <text evidence="1">Belongs to the glycosyltransferase 4 family. MraY subfamily.</text>
</comment>
<proteinExistence type="inferred from homology"/>
<keyword id="KW-0131">Cell cycle</keyword>
<keyword id="KW-0132">Cell division</keyword>
<keyword id="KW-1003">Cell membrane</keyword>
<keyword id="KW-0133">Cell shape</keyword>
<keyword id="KW-0961">Cell wall biogenesis/degradation</keyword>
<keyword id="KW-0460">Magnesium</keyword>
<keyword id="KW-0472">Membrane</keyword>
<keyword id="KW-0479">Metal-binding</keyword>
<keyword id="KW-0573">Peptidoglycan synthesis</keyword>
<keyword id="KW-0808">Transferase</keyword>
<keyword id="KW-0812">Transmembrane</keyword>
<keyword id="KW-1133">Transmembrane helix</keyword>
<protein>
    <recommendedName>
        <fullName evidence="1">Phospho-N-acetylmuramoyl-pentapeptide-transferase</fullName>
        <ecNumber evidence="1">2.7.8.13</ecNumber>
    </recommendedName>
    <alternativeName>
        <fullName evidence="1">UDP-MurNAc-pentapeptide phosphotransferase</fullName>
    </alternativeName>
</protein>
<evidence type="ECO:0000255" key="1">
    <source>
        <dbReference type="HAMAP-Rule" id="MF_00038"/>
    </source>
</evidence>
<dbReference type="EC" id="2.7.8.13" evidence="1"/>
<dbReference type="EMBL" id="AP007281">
    <property type="protein sequence ID" value="BAG25085.1"/>
    <property type="molecule type" value="Genomic_DNA"/>
</dbReference>
<dbReference type="RefSeq" id="WP_003666758.1">
    <property type="nucleotide sequence ID" value="NC_010609.1"/>
</dbReference>
<dbReference type="SMR" id="B2G6K3"/>
<dbReference type="GeneID" id="77190732"/>
<dbReference type="KEGG" id="lrf:LAR_0569"/>
<dbReference type="HOGENOM" id="CLU_023982_0_0_9"/>
<dbReference type="UniPathway" id="UPA00219"/>
<dbReference type="GO" id="GO:0005886">
    <property type="term" value="C:plasma membrane"/>
    <property type="evidence" value="ECO:0007669"/>
    <property type="project" value="UniProtKB-SubCell"/>
</dbReference>
<dbReference type="GO" id="GO:0046872">
    <property type="term" value="F:metal ion binding"/>
    <property type="evidence" value="ECO:0007669"/>
    <property type="project" value="UniProtKB-KW"/>
</dbReference>
<dbReference type="GO" id="GO:0008963">
    <property type="term" value="F:phospho-N-acetylmuramoyl-pentapeptide-transferase activity"/>
    <property type="evidence" value="ECO:0007669"/>
    <property type="project" value="UniProtKB-UniRule"/>
</dbReference>
<dbReference type="GO" id="GO:0051301">
    <property type="term" value="P:cell division"/>
    <property type="evidence" value="ECO:0007669"/>
    <property type="project" value="UniProtKB-KW"/>
</dbReference>
<dbReference type="GO" id="GO:0071555">
    <property type="term" value="P:cell wall organization"/>
    <property type="evidence" value="ECO:0007669"/>
    <property type="project" value="UniProtKB-KW"/>
</dbReference>
<dbReference type="GO" id="GO:0009252">
    <property type="term" value="P:peptidoglycan biosynthetic process"/>
    <property type="evidence" value="ECO:0007669"/>
    <property type="project" value="UniProtKB-UniRule"/>
</dbReference>
<dbReference type="GO" id="GO:0008360">
    <property type="term" value="P:regulation of cell shape"/>
    <property type="evidence" value="ECO:0007669"/>
    <property type="project" value="UniProtKB-KW"/>
</dbReference>
<dbReference type="CDD" id="cd06852">
    <property type="entry name" value="GT_MraY"/>
    <property type="match status" value="1"/>
</dbReference>
<dbReference type="HAMAP" id="MF_00038">
    <property type="entry name" value="MraY"/>
    <property type="match status" value="1"/>
</dbReference>
<dbReference type="InterPro" id="IPR000715">
    <property type="entry name" value="Glycosyl_transferase_4"/>
</dbReference>
<dbReference type="InterPro" id="IPR003524">
    <property type="entry name" value="PNAcMuramoyl-5peptid_Trfase"/>
</dbReference>
<dbReference type="InterPro" id="IPR018480">
    <property type="entry name" value="PNAcMuramoyl-5peptid_Trfase_CS"/>
</dbReference>
<dbReference type="NCBIfam" id="TIGR00445">
    <property type="entry name" value="mraY"/>
    <property type="match status" value="1"/>
</dbReference>
<dbReference type="PANTHER" id="PTHR22926">
    <property type="entry name" value="PHOSPHO-N-ACETYLMURAMOYL-PENTAPEPTIDE-TRANSFERASE"/>
    <property type="match status" value="1"/>
</dbReference>
<dbReference type="PANTHER" id="PTHR22926:SF5">
    <property type="entry name" value="PHOSPHO-N-ACETYLMURAMOYL-PENTAPEPTIDE-TRANSFERASE HOMOLOG"/>
    <property type="match status" value="1"/>
</dbReference>
<dbReference type="Pfam" id="PF00953">
    <property type="entry name" value="Glycos_transf_4"/>
    <property type="match status" value="1"/>
</dbReference>
<dbReference type="Pfam" id="PF10555">
    <property type="entry name" value="MraY_sig1"/>
    <property type="match status" value="1"/>
</dbReference>
<dbReference type="PROSITE" id="PS01347">
    <property type="entry name" value="MRAY_1"/>
    <property type="match status" value="1"/>
</dbReference>
<dbReference type="PROSITE" id="PS01348">
    <property type="entry name" value="MRAY_2"/>
    <property type="match status" value="1"/>
</dbReference>
<feature type="chain" id="PRO_1000090637" description="Phospho-N-acetylmuramoyl-pentapeptide-transferase">
    <location>
        <begin position="1"/>
        <end position="323"/>
    </location>
</feature>
<feature type="transmembrane region" description="Helical" evidence="1">
    <location>
        <begin position="5"/>
        <end position="25"/>
    </location>
</feature>
<feature type="transmembrane region" description="Helical" evidence="1">
    <location>
        <begin position="57"/>
        <end position="77"/>
    </location>
</feature>
<feature type="transmembrane region" description="Helical" evidence="1">
    <location>
        <begin position="81"/>
        <end position="101"/>
    </location>
</feature>
<feature type="transmembrane region" description="Helical" evidence="1">
    <location>
        <begin position="118"/>
        <end position="138"/>
    </location>
</feature>
<feature type="transmembrane region" description="Helical" evidence="1">
    <location>
        <begin position="140"/>
        <end position="160"/>
    </location>
</feature>
<feature type="transmembrane region" description="Helical" evidence="1">
    <location>
        <begin position="173"/>
        <end position="193"/>
    </location>
</feature>
<feature type="transmembrane region" description="Helical" evidence="1">
    <location>
        <begin position="196"/>
        <end position="216"/>
    </location>
</feature>
<feature type="transmembrane region" description="Helical" evidence="1">
    <location>
        <begin position="225"/>
        <end position="247"/>
    </location>
</feature>
<feature type="transmembrane region" description="Helical" evidence="1">
    <location>
        <begin position="302"/>
        <end position="322"/>
    </location>
</feature>
<organism>
    <name type="scientific">Limosilactobacillus reuteri subsp. reuteri (strain JCM 1112)</name>
    <name type="common">Lactobacillus reuteri</name>
    <dbReference type="NCBI Taxonomy" id="557433"/>
    <lineage>
        <taxon>Bacteria</taxon>
        <taxon>Bacillati</taxon>
        <taxon>Bacillota</taxon>
        <taxon>Bacilli</taxon>
        <taxon>Lactobacillales</taxon>
        <taxon>Lactobacillaceae</taxon>
        <taxon>Limosilactobacillus</taxon>
    </lineage>
</organism>
<gene>
    <name evidence="1" type="primary">mraY</name>
    <name type="ordered locus">LAR_0569</name>
</gene>
<accession>B2G6K3</accession>
<sequence length="323" mass="35795">MNFLSAVLTILSSFLITFLLMPSLIKYFRAKKEGQQIRKEGPTWHAKKAGTPTMGGLLFIFSAVVTILWVAAWQGLITNTLWALLFVLVVYGLIGMWDDSIKIFHHQNEGFKPWQKALCQVLAAMVFTVIYQHEGFQMGFGTTQIGWLYGLFIIFWIVGFSNAVNLTDGLDGLVSGLSIISFAAYLIIALVNLNQPGYPEIALFCLAMIGTLLGFFPYNHKPAKIFMGDMGSLAIGASLAAVSLLLHHEWSLLVIGIVYVCETASVILQVASFKTTGKRIFKMTPIHHHFEMSGWSEWKIDIVFWLVGLVAAIIAVTTILLVG</sequence>